<protein>
    <recommendedName>
        <fullName evidence="1">Putative 3-methyladenine DNA glycosylase</fullName>
        <ecNumber evidence="1">3.2.2.-</ecNumber>
    </recommendedName>
</protein>
<reference key="1">
    <citation type="journal article" date="2009" name="Vaccine">
        <title>Whole genome sequence analysis of Mycobacterium bovis bacillus Calmette-Guerin (BCG) Tokyo 172: a comparative study of BCG vaccine substrains.</title>
        <authorList>
            <person name="Seki M."/>
            <person name="Honda I."/>
            <person name="Fujita I."/>
            <person name="Yano I."/>
            <person name="Yamamoto S."/>
            <person name="Koyama A."/>
        </authorList>
    </citation>
    <scope>NUCLEOTIDE SEQUENCE [LARGE SCALE GENOMIC DNA]</scope>
    <source>
        <strain>BCG / Tokyo 172 / ATCC 35737 / TMC 1019</strain>
    </source>
</reference>
<organism>
    <name type="scientific">Mycobacterium bovis (strain BCG / Tokyo 172 / ATCC 35737 / TMC 1019)</name>
    <dbReference type="NCBI Taxonomy" id="561275"/>
    <lineage>
        <taxon>Bacteria</taxon>
        <taxon>Bacillati</taxon>
        <taxon>Actinomycetota</taxon>
        <taxon>Actinomycetes</taxon>
        <taxon>Mycobacteriales</taxon>
        <taxon>Mycobacteriaceae</taxon>
        <taxon>Mycobacterium</taxon>
        <taxon>Mycobacterium tuberculosis complex</taxon>
    </lineage>
</organism>
<keyword id="KW-0227">DNA damage</keyword>
<keyword id="KW-0234">DNA repair</keyword>
<keyword id="KW-0378">Hydrolase</keyword>
<proteinExistence type="inferred from homology"/>
<sequence>MNAEELAIDPVAAAHRLLGATIAGRGVRAMVVEVEAYGGVPDGPWPDAAAHSYRGRNGRNDVMFGPPGRLYTYRSHGIHVCANVACGPDGTAAAVLLRAAAIEDGAELATSRRGQTVRAVALARGPGNLCAALGITMADNGIDLFDPSSPVRLRLNDTHRARSGPRVGVSQAADRPWRLWLTGRPEVSAYRRSSRAPARGASD</sequence>
<comment type="similarity">
    <text evidence="1">Belongs to the DNA glycosylase MPG family.</text>
</comment>
<evidence type="ECO:0000255" key="1">
    <source>
        <dbReference type="HAMAP-Rule" id="MF_00527"/>
    </source>
</evidence>
<accession>C1ANW0</accession>
<dbReference type="EC" id="3.2.2.-" evidence="1"/>
<dbReference type="EMBL" id="AP010918">
    <property type="protein sequence ID" value="BAH25989.1"/>
    <property type="molecule type" value="Genomic_DNA"/>
</dbReference>
<dbReference type="RefSeq" id="WP_003408373.1">
    <property type="nucleotide sequence ID" value="NZ_CP014566.1"/>
</dbReference>
<dbReference type="SMR" id="C1ANW0"/>
<dbReference type="KEGG" id="mbt:JTY_1701"/>
<dbReference type="HOGENOM" id="CLU_060471_3_1_11"/>
<dbReference type="GO" id="GO:0003905">
    <property type="term" value="F:alkylbase DNA N-glycosylase activity"/>
    <property type="evidence" value="ECO:0007669"/>
    <property type="project" value="InterPro"/>
</dbReference>
<dbReference type="GO" id="GO:0003677">
    <property type="term" value="F:DNA binding"/>
    <property type="evidence" value="ECO:0007669"/>
    <property type="project" value="InterPro"/>
</dbReference>
<dbReference type="GO" id="GO:0006284">
    <property type="term" value="P:base-excision repair"/>
    <property type="evidence" value="ECO:0007669"/>
    <property type="project" value="InterPro"/>
</dbReference>
<dbReference type="CDD" id="cd00540">
    <property type="entry name" value="AAG"/>
    <property type="match status" value="1"/>
</dbReference>
<dbReference type="Gene3D" id="3.10.300.10">
    <property type="entry name" value="Methylpurine-DNA glycosylase (MPG)"/>
    <property type="match status" value="1"/>
</dbReference>
<dbReference type="HAMAP" id="MF_00527">
    <property type="entry name" value="3MGH"/>
    <property type="match status" value="1"/>
</dbReference>
<dbReference type="InterPro" id="IPR011034">
    <property type="entry name" value="Formyl_transferase-like_C_sf"/>
</dbReference>
<dbReference type="InterPro" id="IPR003180">
    <property type="entry name" value="MPG"/>
</dbReference>
<dbReference type="InterPro" id="IPR036995">
    <property type="entry name" value="MPG_sf"/>
</dbReference>
<dbReference type="NCBIfam" id="TIGR00567">
    <property type="entry name" value="3mg"/>
    <property type="match status" value="1"/>
</dbReference>
<dbReference type="NCBIfam" id="NF002003">
    <property type="entry name" value="PRK00802.1-3"/>
    <property type="match status" value="1"/>
</dbReference>
<dbReference type="PANTHER" id="PTHR10429">
    <property type="entry name" value="DNA-3-METHYLADENINE GLYCOSYLASE"/>
    <property type="match status" value="1"/>
</dbReference>
<dbReference type="PANTHER" id="PTHR10429:SF0">
    <property type="entry name" value="DNA-3-METHYLADENINE GLYCOSYLASE"/>
    <property type="match status" value="1"/>
</dbReference>
<dbReference type="Pfam" id="PF02245">
    <property type="entry name" value="Pur_DNA_glyco"/>
    <property type="match status" value="1"/>
</dbReference>
<dbReference type="SUPFAM" id="SSF50486">
    <property type="entry name" value="FMT C-terminal domain-like"/>
    <property type="match status" value="1"/>
</dbReference>
<gene>
    <name type="ordered locus">JTY_1701</name>
</gene>
<feature type="chain" id="PRO_1000146269" description="Putative 3-methyladenine DNA glycosylase">
    <location>
        <begin position="1"/>
        <end position="203"/>
    </location>
</feature>
<name>3MGH_MYCBT</name>